<proteinExistence type="evidence at transcript level"/>
<reference key="1">
    <citation type="submission" date="2007-06" db="EMBL/GenBank/DDBJ databases">
        <authorList>
            <consortium name="NIH - Mammalian Gene Collection (MGC) project"/>
        </authorList>
    </citation>
    <scope>NUCLEOTIDE SEQUENCE [LARGE SCALE MRNA]</scope>
    <source>
        <strain>Hereford</strain>
        <tissue>Fetal skin</tissue>
    </source>
</reference>
<sequence length="444" mass="48646">MAIFRQLSLGAKAALAAGTVFVSMIVSRSYLAESLEFRAWRCLFRLQLALFVNSLMLLGSIYIWRSTVSNLRHSPAAESACFQLWKMVVAAFLALAHSSFFTMIFLVAEEPYLFSLVAYTCLGAYVIMLCFLCVLSGMEQAYQLLAWRAGRAVGSLDKTRKLALRPALAVMVTTVLSVVGLLNAAQPPAVTTVEVPVHRLPPSMNSLKIVLLSDIHLGPTVGRTKMDMFVRMVNTLEPDVTVIVGDLCDSEASVLRTAVAPLGQLRSRLGTYFVTGNHEYYTSDVSNWFALLMSLNVQPLHNENVRISATGAHREDDDWICLAGVDDIEANILHYTGHGMDLEKALEGCSPDHPTILLAHQPLAAKRALQARPDINLILSGHTHAGQIFPLNVAAYLLNPFFAGLYQVAETTFVYVSPGTAYYGIPMRLGSRAEITQLILQAAP</sequence>
<evidence type="ECO:0000250" key="1"/>
<evidence type="ECO:0000255" key="2"/>
<evidence type="ECO:0000305" key="3"/>
<protein>
    <recommendedName>
        <fullName>Transmembrane protein with metallophosphoesterase domain</fullName>
        <ecNumber>3.1.-.-</ecNumber>
    </recommendedName>
</protein>
<accession>A5PJK1</accession>
<keyword id="KW-0378">Hydrolase</keyword>
<keyword id="KW-0472">Membrane</keyword>
<keyword id="KW-0479">Metal-binding</keyword>
<keyword id="KW-1185">Reference proteome</keyword>
<keyword id="KW-0812">Transmembrane</keyword>
<keyword id="KW-1133">Transmembrane helix</keyword>
<organism>
    <name type="scientific">Bos taurus</name>
    <name type="common">Bovine</name>
    <dbReference type="NCBI Taxonomy" id="9913"/>
    <lineage>
        <taxon>Eukaryota</taxon>
        <taxon>Metazoa</taxon>
        <taxon>Chordata</taxon>
        <taxon>Craniata</taxon>
        <taxon>Vertebrata</taxon>
        <taxon>Euteleostomi</taxon>
        <taxon>Mammalia</taxon>
        <taxon>Eutheria</taxon>
        <taxon>Laurasiatheria</taxon>
        <taxon>Artiodactyla</taxon>
        <taxon>Ruminantia</taxon>
        <taxon>Pecora</taxon>
        <taxon>Bovidae</taxon>
        <taxon>Bovinae</taxon>
        <taxon>Bos</taxon>
    </lineage>
</organism>
<comment type="cofactor">
    <cofactor evidence="1">
        <name>a divalent metal cation</name>
        <dbReference type="ChEBI" id="CHEBI:60240"/>
    </cofactor>
    <text evidence="1">Binds 2 divalent metal cations.</text>
</comment>
<comment type="subcellular location">
    <subcellularLocation>
        <location evidence="3">Membrane</location>
        <topology evidence="3">Multi-pass membrane protein</topology>
    </subcellularLocation>
</comment>
<comment type="similarity">
    <text evidence="3">Belongs to the metallophosphoesterase superfamily. LOC643853 family.</text>
</comment>
<name>TMPPE_BOVIN</name>
<feature type="chain" id="PRO_0000322115" description="Transmembrane protein with metallophosphoesterase domain">
    <location>
        <begin position="1"/>
        <end position="444"/>
    </location>
</feature>
<feature type="transmembrane region" description="Helical" evidence="2">
    <location>
        <begin position="7"/>
        <end position="27"/>
    </location>
</feature>
<feature type="transmembrane region" description="Helical" evidence="2">
    <location>
        <begin position="43"/>
        <end position="63"/>
    </location>
</feature>
<feature type="transmembrane region" description="Helical" evidence="2">
    <location>
        <begin position="87"/>
        <end position="107"/>
    </location>
</feature>
<feature type="transmembrane region" description="Helical" evidence="2">
    <location>
        <begin position="114"/>
        <end position="134"/>
    </location>
</feature>
<feature type="transmembrane region" description="Helical" evidence="2">
    <location>
        <begin position="162"/>
        <end position="182"/>
    </location>
</feature>
<feature type="binding site" evidence="1">
    <location>
        <position position="214"/>
    </location>
    <ligand>
        <name>a divalent metal cation</name>
        <dbReference type="ChEBI" id="CHEBI:60240"/>
        <label>1</label>
    </ligand>
</feature>
<feature type="binding site" evidence="1">
    <location>
        <position position="216"/>
    </location>
    <ligand>
        <name>a divalent metal cation</name>
        <dbReference type="ChEBI" id="CHEBI:60240"/>
        <label>1</label>
    </ligand>
</feature>
<feature type="binding site" evidence="1">
    <location>
        <position position="246"/>
    </location>
    <ligand>
        <name>a divalent metal cation</name>
        <dbReference type="ChEBI" id="CHEBI:60240"/>
        <label>1</label>
    </ligand>
</feature>
<feature type="binding site" evidence="1">
    <location>
        <position position="246"/>
    </location>
    <ligand>
        <name>a divalent metal cation</name>
        <dbReference type="ChEBI" id="CHEBI:60240"/>
        <label>2</label>
    </ligand>
</feature>
<feature type="binding site" evidence="1">
    <location>
        <position position="277"/>
    </location>
    <ligand>
        <name>a divalent metal cation</name>
        <dbReference type="ChEBI" id="CHEBI:60240"/>
        <label>2</label>
    </ligand>
</feature>
<feature type="binding site" evidence="1">
    <location>
        <position position="382"/>
    </location>
    <ligand>
        <name>a divalent metal cation</name>
        <dbReference type="ChEBI" id="CHEBI:60240"/>
        <label>2</label>
    </ligand>
</feature>
<feature type="binding site" evidence="1">
    <location>
        <position position="384"/>
    </location>
    <ligand>
        <name>a divalent metal cation</name>
        <dbReference type="ChEBI" id="CHEBI:60240"/>
        <label>1</label>
    </ligand>
</feature>
<gene>
    <name type="primary">TMPPE</name>
</gene>
<dbReference type="EC" id="3.1.-.-"/>
<dbReference type="EMBL" id="BC142143">
    <property type="protein sequence ID" value="AAI42144.1"/>
    <property type="molecule type" value="mRNA"/>
</dbReference>
<dbReference type="RefSeq" id="NP_001093181.1">
    <property type="nucleotide sequence ID" value="NM_001099711.1"/>
</dbReference>
<dbReference type="RefSeq" id="XP_005222530.1">
    <property type="nucleotide sequence ID" value="XM_005222473.3"/>
</dbReference>
<dbReference type="RefSeq" id="XP_005222531.1">
    <property type="nucleotide sequence ID" value="XM_005222474.5"/>
</dbReference>
<dbReference type="RefSeq" id="XP_024838516.1">
    <property type="nucleotide sequence ID" value="XM_024982748.2"/>
</dbReference>
<dbReference type="SMR" id="A5PJK1"/>
<dbReference type="FunCoup" id="A5PJK1">
    <property type="interactions" value="234"/>
</dbReference>
<dbReference type="GeneID" id="527730"/>
<dbReference type="KEGG" id="bta:527730"/>
<dbReference type="CTD" id="643853"/>
<dbReference type="InParanoid" id="A5PJK1"/>
<dbReference type="OrthoDB" id="783096at2759"/>
<dbReference type="Proteomes" id="UP000009136">
    <property type="component" value="Unplaced"/>
</dbReference>
<dbReference type="GO" id="GO:0016020">
    <property type="term" value="C:membrane"/>
    <property type="evidence" value="ECO:0007669"/>
    <property type="project" value="UniProtKB-SubCell"/>
</dbReference>
<dbReference type="GO" id="GO:0016787">
    <property type="term" value="F:hydrolase activity"/>
    <property type="evidence" value="ECO:0007669"/>
    <property type="project" value="UniProtKB-KW"/>
</dbReference>
<dbReference type="GO" id="GO:0046872">
    <property type="term" value="F:metal ion binding"/>
    <property type="evidence" value="ECO:0007669"/>
    <property type="project" value="UniProtKB-KW"/>
</dbReference>
<dbReference type="CDD" id="cd07385">
    <property type="entry name" value="MPP_YkuE_C"/>
    <property type="match status" value="1"/>
</dbReference>
<dbReference type="Gene3D" id="3.60.21.10">
    <property type="match status" value="1"/>
</dbReference>
<dbReference type="InterPro" id="IPR004843">
    <property type="entry name" value="Calcineurin-like_PHP_ApaH"/>
</dbReference>
<dbReference type="InterPro" id="IPR029052">
    <property type="entry name" value="Metallo-depent_PP-like"/>
</dbReference>
<dbReference type="InterPro" id="IPR051158">
    <property type="entry name" value="Metallophosphoesterase_sf"/>
</dbReference>
<dbReference type="PANTHER" id="PTHR31302:SF0">
    <property type="entry name" value="TRANSMEMBRANE PROTEIN WITH METALLOPHOSPHOESTERASE DOMAIN"/>
    <property type="match status" value="1"/>
</dbReference>
<dbReference type="PANTHER" id="PTHR31302">
    <property type="entry name" value="TRANSMEMBRANE PROTEIN WITH METALLOPHOSPHOESTERASE DOMAIN-RELATED"/>
    <property type="match status" value="1"/>
</dbReference>
<dbReference type="Pfam" id="PF00149">
    <property type="entry name" value="Metallophos"/>
    <property type="match status" value="1"/>
</dbReference>
<dbReference type="SUPFAM" id="SSF56300">
    <property type="entry name" value="Metallo-dependent phosphatases"/>
    <property type="match status" value="1"/>
</dbReference>